<dbReference type="EMBL" id="CP001033">
    <property type="protein sequence ID" value="ACB89335.1"/>
    <property type="molecule type" value="Genomic_DNA"/>
</dbReference>
<dbReference type="RefSeq" id="WP_000092756.1">
    <property type="nucleotide sequence ID" value="NC_010582.1"/>
</dbReference>
<dbReference type="SMR" id="B2IRG4"/>
<dbReference type="GeneID" id="93738707"/>
<dbReference type="KEGG" id="spw:SPCG_0083"/>
<dbReference type="HOGENOM" id="CLU_092403_0_1_9"/>
<dbReference type="GO" id="GO:0015935">
    <property type="term" value="C:small ribosomal subunit"/>
    <property type="evidence" value="ECO:0007669"/>
    <property type="project" value="InterPro"/>
</dbReference>
<dbReference type="GO" id="GO:0019843">
    <property type="term" value="F:rRNA binding"/>
    <property type="evidence" value="ECO:0007669"/>
    <property type="project" value="UniProtKB-UniRule"/>
</dbReference>
<dbReference type="GO" id="GO:0003735">
    <property type="term" value="F:structural constituent of ribosome"/>
    <property type="evidence" value="ECO:0007669"/>
    <property type="project" value="InterPro"/>
</dbReference>
<dbReference type="GO" id="GO:0042274">
    <property type="term" value="P:ribosomal small subunit biogenesis"/>
    <property type="evidence" value="ECO:0007669"/>
    <property type="project" value="TreeGrafter"/>
</dbReference>
<dbReference type="GO" id="GO:0006412">
    <property type="term" value="P:translation"/>
    <property type="evidence" value="ECO:0007669"/>
    <property type="project" value="UniProtKB-UniRule"/>
</dbReference>
<dbReference type="CDD" id="cd00165">
    <property type="entry name" value="S4"/>
    <property type="match status" value="1"/>
</dbReference>
<dbReference type="FunFam" id="1.10.1050.10:FF:000001">
    <property type="entry name" value="30S ribosomal protein S4"/>
    <property type="match status" value="1"/>
</dbReference>
<dbReference type="FunFam" id="3.10.290.10:FF:000001">
    <property type="entry name" value="30S ribosomal protein S4"/>
    <property type="match status" value="1"/>
</dbReference>
<dbReference type="Gene3D" id="1.10.1050.10">
    <property type="entry name" value="Ribosomal Protein S4 Delta 41, Chain A, domain 1"/>
    <property type="match status" value="1"/>
</dbReference>
<dbReference type="Gene3D" id="3.10.290.10">
    <property type="entry name" value="RNA-binding S4 domain"/>
    <property type="match status" value="1"/>
</dbReference>
<dbReference type="HAMAP" id="MF_01306_B">
    <property type="entry name" value="Ribosomal_uS4_B"/>
    <property type="match status" value="1"/>
</dbReference>
<dbReference type="InterPro" id="IPR022801">
    <property type="entry name" value="Ribosomal_uS4"/>
</dbReference>
<dbReference type="InterPro" id="IPR005709">
    <property type="entry name" value="Ribosomal_uS4_bac-type"/>
</dbReference>
<dbReference type="InterPro" id="IPR018079">
    <property type="entry name" value="Ribosomal_uS4_CS"/>
</dbReference>
<dbReference type="InterPro" id="IPR001912">
    <property type="entry name" value="Ribosomal_uS4_N"/>
</dbReference>
<dbReference type="InterPro" id="IPR002942">
    <property type="entry name" value="S4_RNA-bd"/>
</dbReference>
<dbReference type="InterPro" id="IPR036986">
    <property type="entry name" value="S4_RNA-bd_sf"/>
</dbReference>
<dbReference type="NCBIfam" id="NF003717">
    <property type="entry name" value="PRK05327.1"/>
    <property type="match status" value="1"/>
</dbReference>
<dbReference type="NCBIfam" id="TIGR01017">
    <property type="entry name" value="rpsD_bact"/>
    <property type="match status" value="1"/>
</dbReference>
<dbReference type="PANTHER" id="PTHR11831">
    <property type="entry name" value="30S 40S RIBOSOMAL PROTEIN"/>
    <property type="match status" value="1"/>
</dbReference>
<dbReference type="PANTHER" id="PTHR11831:SF4">
    <property type="entry name" value="SMALL RIBOSOMAL SUBUNIT PROTEIN US4M"/>
    <property type="match status" value="1"/>
</dbReference>
<dbReference type="Pfam" id="PF00163">
    <property type="entry name" value="Ribosomal_S4"/>
    <property type="match status" value="1"/>
</dbReference>
<dbReference type="Pfam" id="PF01479">
    <property type="entry name" value="S4"/>
    <property type="match status" value="1"/>
</dbReference>
<dbReference type="SMART" id="SM01390">
    <property type="entry name" value="Ribosomal_S4"/>
    <property type="match status" value="1"/>
</dbReference>
<dbReference type="SMART" id="SM00363">
    <property type="entry name" value="S4"/>
    <property type="match status" value="1"/>
</dbReference>
<dbReference type="SUPFAM" id="SSF55174">
    <property type="entry name" value="Alpha-L RNA-binding motif"/>
    <property type="match status" value="1"/>
</dbReference>
<dbReference type="PROSITE" id="PS00632">
    <property type="entry name" value="RIBOSOMAL_S4"/>
    <property type="match status" value="1"/>
</dbReference>
<dbReference type="PROSITE" id="PS50889">
    <property type="entry name" value="S4"/>
    <property type="match status" value="1"/>
</dbReference>
<accession>B2IRG4</accession>
<reference key="1">
    <citation type="journal article" date="2009" name="BMC Genomics">
        <title>Genome evolution driven by host adaptations results in a more virulent and antimicrobial-resistant Streptococcus pneumoniae serotype 14.</title>
        <authorList>
            <person name="Ding F."/>
            <person name="Tang P."/>
            <person name="Hsu M.-H."/>
            <person name="Cui P."/>
            <person name="Hu S."/>
            <person name="Yu J."/>
            <person name="Chiu C.-H."/>
        </authorList>
    </citation>
    <scope>NUCLEOTIDE SEQUENCE [LARGE SCALE GENOMIC DNA]</scope>
    <source>
        <strain>CGSP14</strain>
    </source>
</reference>
<protein>
    <recommendedName>
        <fullName evidence="1">Small ribosomal subunit protein uS4</fullName>
    </recommendedName>
    <alternativeName>
        <fullName evidence="2">30S ribosomal protein S4</fullName>
    </alternativeName>
</protein>
<sequence length="203" mass="23029">MSRYTGPSWKQARRLGLSLTGTGKELARRNYVPGQHGPNNRSKLSEYGLQLAEKQKLRFTYGVGEKQFRNLFVQATKIKGGILGFNFMLLLERRLDNVVYRLGLATTRRQARQFVNHGHILVDGKRVDIPSYRVTPGQVISVREKSLKVPAILEAVEATLGRPAFVSFDAEKLEGSLTRLPERDEINPEINEALVVEFYNKML</sequence>
<evidence type="ECO:0000255" key="1">
    <source>
        <dbReference type="HAMAP-Rule" id="MF_01306"/>
    </source>
</evidence>
<evidence type="ECO:0000305" key="2"/>
<organism>
    <name type="scientific">Streptococcus pneumoniae (strain CGSP14)</name>
    <dbReference type="NCBI Taxonomy" id="516950"/>
    <lineage>
        <taxon>Bacteria</taxon>
        <taxon>Bacillati</taxon>
        <taxon>Bacillota</taxon>
        <taxon>Bacilli</taxon>
        <taxon>Lactobacillales</taxon>
        <taxon>Streptococcaceae</taxon>
        <taxon>Streptococcus</taxon>
    </lineage>
</organism>
<keyword id="KW-0687">Ribonucleoprotein</keyword>
<keyword id="KW-0689">Ribosomal protein</keyword>
<keyword id="KW-0694">RNA-binding</keyword>
<keyword id="KW-0699">rRNA-binding</keyword>
<feature type="chain" id="PRO_1000140801" description="Small ribosomal subunit protein uS4">
    <location>
        <begin position="1"/>
        <end position="203"/>
    </location>
</feature>
<feature type="domain" description="S4 RNA-binding" evidence="1">
    <location>
        <begin position="93"/>
        <end position="156"/>
    </location>
</feature>
<name>RS4_STRPS</name>
<comment type="function">
    <text evidence="1">One of the primary rRNA binding proteins, it binds directly to 16S rRNA where it nucleates assembly of the body of the 30S subunit.</text>
</comment>
<comment type="function">
    <text evidence="1">With S5 and S12 plays an important role in translational accuracy.</text>
</comment>
<comment type="subunit">
    <text evidence="1">Part of the 30S ribosomal subunit. Contacts protein S5. The interaction surface between S4 and S5 is involved in control of translational fidelity.</text>
</comment>
<comment type="similarity">
    <text evidence="1">Belongs to the universal ribosomal protein uS4 family.</text>
</comment>
<gene>
    <name evidence="1" type="primary">rpsD</name>
    <name type="ordered locus">SPCG_0083</name>
</gene>
<proteinExistence type="inferred from homology"/>